<dbReference type="EMBL" id="AL009126">
    <property type="protein sequence ID" value="CAB12998.1"/>
    <property type="molecule type" value="Genomic_DNA"/>
</dbReference>
<dbReference type="PIR" id="A69843">
    <property type="entry name" value="A69843"/>
</dbReference>
<dbReference type="RefSeq" id="NP_389023.1">
    <property type="nucleotide sequence ID" value="NC_000964.3"/>
</dbReference>
<dbReference type="RefSeq" id="WP_003239298.1">
    <property type="nucleotide sequence ID" value="NZ_OZ025638.1"/>
</dbReference>
<dbReference type="PDB" id="8B3S">
    <property type="method" value="X-ray"/>
    <property type="resolution" value="2.09 A"/>
    <property type="chains" value="A=1-250"/>
</dbReference>
<dbReference type="PDBsum" id="8B3S"/>
<dbReference type="SMR" id="O31597"/>
<dbReference type="FunCoup" id="O31597">
    <property type="interactions" value="86"/>
</dbReference>
<dbReference type="STRING" id="224308.BSU11410"/>
<dbReference type="PaxDb" id="224308-BSU11410"/>
<dbReference type="EnsemblBacteria" id="CAB12998">
    <property type="protein sequence ID" value="CAB12998"/>
    <property type="gene ID" value="BSU_11410"/>
</dbReference>
<dbReference type="GeneID" id="939369"/>
<dbReference type="KEGG" id="bsu:BSU11410"/>
<dbReference type="PATRIC" id="fig|224308.179.peg.1227"/>
<dbReference type="eggNOG" id="ENOG502Z8PJ">
    <property type="taxonomic scope" value="Bacteria"/>
</dbReference>
<dbReference type="InParanoid" id="O31597"/>
<dbReference type="OrthoDB" id="2960746at2"/>
<dbReference type="BioCyc" id="BSUB:BSU11410-MONOMER"/>
<dbReference type="Proteomes" id="UP000001570">
    <property type="component" value="Chromosome"/>
</dbReference>
<dbReference type="HAMAP" id="MF_01860">
    <property type="entry name" value="UPF0736"/>
    <property type="match status" value="1"/>
</dbReference>
<dbReference type="InterPro" id="IPR020909">
    <property type="entry name" value="UPF0736"/>
</dbReference>
<dbReference type="Pfam" id="PF12227">
    <property type="entry name" value="DUF3603"/>
    <property type="match status" value="1"/>
</dbReference>
<evidence type="ECO:0000255" key="1">
    <source>
        <dbReference type="HAMAP-Rule" id="MF_01860"/>
    </source>
</evidence>
<accession>O31597</accession>
<comment type="similarity">
    <text evidence="1">Belongs to the UPF0736 family.</text>
</comment>
<gene>
    <name type="primary">yjbA</name>
    <name type="ordered locus">BSU11410</name>
</gene>
<reference key="1">
    <citation type="journal article" date="1997" name="Nature">
        <title>The complete genome sequence of the Gram-positive bacterium Bacillus subtilis.</title>
        <authorList>
            <person name="Kunst F."/>
            <person name="Ogasawara N."/>
            <person name="Moszer I."/>
            <person name="Albertini A.M."/>
            <person name="Alloni G."/>
            <person name="Azevedo V."/>
            <person name="Bertero M.G."/>
            <person name="Bessieres P."/>
            <person name="Bolotin A."/>
            <person name="Borchert S."/>
            <person name="Borriss R."/>
            <person name="Boursier L."/>
            <person name="Brans A."/>
            <person name="Braun M."/>
            <person name="Brignell S.C."/>
            <person name="Bron S."/>
            <person name="Brouillet S."/>
            <person name="Bruschi C.V."/>
            <person name="Caldwell B."/>
            <person name="Capuano V."/>
            <person name="Carter N.M."/>
            <person name="Choi S.-K."/>
            <person name="Codani J.-J."/>
            <person name="Connerton I.F."/>
            <person name="Cummings N.J."/>
            <person name="Daniel R.A."/>
            <person name="Denizot F."/>
            <person name="Devine K.M."/>
            <person name="Duesterhoeft A."/>
            <person name="Ehrlich S.D."/>
            <person name="Emmerson P.T."/>
            <person name="Entian K.-D."/>
            <person name="Errington J."/>
            <person name="Fabret C."/>
            <person name="Ferrari E."/>
            <person name="Foulger D."/>
            <person name="Fritz C."/>
            <person name="Fujita M."/>
            <person name="Fujita Y."/>
            <person name="Fuma S."/>
            <person name="Galizzi A."/>
            <person name="Galleron N."/>
            <person name="Ghim S.-Y."/>
            <person name="Glaser P."/>
            <person name="Goffeau A."/>
            <person name="Golightly E.J."/>
            <person name="Grandi G."/>
            <person name="Guiseppi G."/>
            <person name="Guy B.J."/>
            <person name="Haga K."/>
            <person name="Haiech J."/>
            <person name="Harwood C.R."/>
            <person name="Henaut A."/>
            <person name="Hilbert H."/>
            <person name="Holsappel S."/>
            <person name="Hosono S."/>
            <person name="Hullo M.-F."/>
            <person name="Itaya M."/>
            <person name="Jones L.-M."/>
            <person name="Joris B."/>
            <person name="Karamata D."/>
            <person name="Kasahara Y."/>
            <person name="Klaerr-Blanchard M."/>
            <person name="Klein C."/>
            <person name="Kobayashi Y."/>
            <person name="Koetter P."/>
            <person name="Koningstein G."/>
            <person name="Krogh S."/>
            <person name="Kumano M."/>
            <person name="Kurita K."/>
            <person name="Lapidus A."/>
            <person name="Lardinois S."/>
            <person name="Lauber J."/>
            <person name="Lazarevic V."/>
            <person name="Lee S.-M."/>
            <person name="Levine A."/>
            <person name="Liu H."/>
            <person name="Masuda S."/>
            <person name="Mauel C."/>
            <person name="Medigue C."/>
            <person name="Medina N."/>
            <person name="Mellado R.P."/>
            <person name="Mizuno M."/>
            <person name="Moestl D."/>
            <person name="Nakai S."/>
            <person name="Noback M."/>
            <person name="Noone D."/>
            <person name="O'Reilly M."/>
            <person name="Ogawa K."/>
            <person name="Ogiwara A."/>
            <person name="Oudega B."/>
            <person name="Park S.-H."/>
            <person name="Parro V."/>
            <person name="Pohl T.M."/>
            <person name="Portetelle D."/>
            <person name="Porwollik S."/>
            <person name="Prescott A.M."/>
            <person name="Presecan E."/>
            <person name="Pujic P."/>
            <person name="Purnelle B."/>
            <person name="Rapoport G."/>
            <person name="Rey M."/>
            <person name="Reynolds S."/>
            <person name="Rieger M."/>
            <person name="Rivolta C."/>
            <person name="Rocha E."/>
            <person name="Roche B."/>
            <person name="Rose M."/>
            <person name="Sadaie Y."/>
            <person name="Sato T."/>
            <person name="Scanlan E."/>
            <person name="Schleich S."/>
            <person name="Schroeter R."/>
            <person name="Scoffone F."/>
            <person name="Sekiguchi J."/>
            <person name="Sekowska A."/>
            <person name="Seror S.J."/>
            <person name="Serror P."/>
            <person name="Shin B.-S."/>
            <person name="Soldo B."/>
            <person name="Sorokin A."/>
            <person name="Tacconi E."/>
            <person name="Takagi T."/>
            <person name="Takahashi H."/>
            <person name="Takemaru K."/>
            <person name="Takeuchi M."/>
            <person name="Tamakoshi A."/>
            <person name="Tanaka T."/>
            <person name="Terpstra P."/>
            <person name="Tognoni A."/>
            <person name="Tosato V."/>
            <person name="Uchiyama S."/>
            <person name="Vandenbol M."/>
            <person name="Vannier F."/>
            <person name="Vassarotti A."/>
            <person name="Viari A."/>
            <person name="Wambutt R."/>
            <person name="Wedler E."/>
            <person name="Wedler H."/>
            <person name="Weitzenegger T."/>
            <person name="Winters P."/>
            <person name="Wipat A."/>
            <person name="Yamamoto H."/>
            <person name="Yamane K."/>
            <person name="Yasumoto K."/>
            <person name="Yata K."/>
            <person name="Yoshida K."/>
            <person name="Yoshikawa H.-F."/>
            <person name="Zumstein E."/>
            <person name="Yoshikawa H."/>
            <person name="Danchin A."/>
        </authorList>
    </citation>
    <scope>NUCLEOTIDE SEQUENCE [LARGE SCALE GENOMIC DNA]</scope>
    <source>
        <strain>168</strain>
    </source>
</reference>
<organism>
    <name type="scientific">Bacillus subtilis (strain 168)</name>
    <dbReference type="NCBI Taxonomy" id="224308"/>
    <lineage>
        <taxon>Bacteria</taxon>
        <taxon>Bacillati</taxon>
        <taxon>Bacillota</taxon>
        <taxon>Bacilli</taxon>
        <taxon>Bacillales</taxon>
        <taxon>Bacillaceae</taxon>
        <taxon>Bacillus</taxon>
    </lineage>
</organism>
<keyword id="KW-0002">3D-structure</keyword>
<keyword id="KW-1185">Reference proteome</keyword>
<sequence length="250" mass="30119">MLFLHDVWVNWFEGEENGYNVCHFHEWRKEDTVELLDQVPLLRVPSVLFHYIENDLSELPKGLLEDVHQKSYIRKNHERTKLEYCFVVTDGIGILAVDTIGYTIPVRKSRLIPRQEQLVYEMVKDVEPETYEFEPKKLESSKEYHILSLAPEHVRGLTRKERQIKQLMFMALDQLKGLKNRAEIGYWYTEWNPHMYEQIKRMSFEEIWDMLYNETIEGWSDKHLAFCENLIKGQPFFEKLWEMENESKVN</sequence>
<protein>
    <recommendedName>
        <fullName evidence="1">UPF0736 protein YjbA</fullName>
    </recommendedName>
</protein>
<name>YJBA_BACSU</name>
<proteinExistence type="evidence at protein level"/>
<feature type="chain" id="PRO_0000369147" description="UPF0736 protein YjbA">
    <location>
        <begin position="1"/>
        <end position="250"/>
    </location>
</feature>